<keyword id="KW-0997">Cell inner membrane</keyword>
<keyword id="KW-1003">Cell membrane</keyword>
<keyword id="KW-0472">Membrane</keyword>
<keyword id="KW-0653">Protein transport</keyword>
<keyword id="KW-1185">Reference proteome</keyword>
<keyword id="KW-0811">Translocation</keyword>
<keyword id="KW-0812">Transmembrane</keyword>
<keyword id="KW-1133">Transmembrane helix</keyword>
<keyword id="KW-0813">Transport</keyword>
<reference key="1">
    <citation type="journal article" date="2003" name="Proc. Natl. Acad. Sci. U.S.A.">
        <title>The complete genome sequence of Chromobacterium violaceum reveals remarkable and exploitable bacterial adaptability.</title>
        <authorList>
            <person name="Vasconcelos A.T.R."/>
            <person name="de Almeida D.F."/>
            <person name="Hungria M."/>
            <person name="Guimaraes C.T."/>
            <person name="Antonio R.V."/>
            <person name="Almeida F.C."/>
            <person name="de Almeida L.G.P."/>
            <person name="de Almeida R."/>
            <person name="Alves-Gomes J.A."/>
            <person name="Andrade E.M."/>
            <person name="Araripe J."/>
            <person name="de Araujo M.F.F."/>
            <person name="Astolfi-Filho S."/>
            <person name="Azevedo V."/>
            <person name="Baptista A.J."/>
            <person name="Bataus L.A.M."/>
            <person name="Batista J.S."/>
            <person name="Belo A."/>
            <person name="van den Berg C."/>
            <person name="Bogo M."/>
            <person name="Bonatto S."/>
            <person name="Bordignon J."/>
            <person name="Brigido M.M."/>
            <person name="Brito C.A."/>
            <person name="Brocchi M."/>
            <person name="Burity H.A."/>
            <person name="Camargo A.A."/>
            <person name="Cardoso D.D.P."/>
            <person name="Carneiro N.P."/>
            <person name="Carraro D.M."/>
            <person name="Carvalho C.M.B."/>
            <person name="Cascardo J.C.M."/>
            <person name="Cavada B.S."/>
            <person name="Chueire L.M.O."/>
            <person name="Creczynski-Pasa T.B."/>
            <person name="Cunha-Junior N.C."/>
            <person name="Fagundes N."/>
            <person name="Falcao C.L."/>
            <person name="Fantinatti F."/>
            <person name="Farias I.P."/>
            <person name="Felipe M.S.S."/>
            <person name="Ferrari L.P."/>
            <person name="Ferro J.A."/>
            <person name="Ferro M.I.T."/>
            <person name="Franco G.R."/>
            <person name="Freitas N.S.A."/>
            <person name="Furlan L.R."/>
            <person name="Gazzinelli R.T."/>
            <person name="Gomes E.A."/>
            <person name="Goncalves P.R."/>
            <person name="Grangeiro T.B."/>
            <person name="Grattapaglia D."/>
            <person name="Grisard E.C."/>
            <person name="Hanna E.S."/>
            <person name="Jardim S.N."/>
            <person name="Laurino J."/>
            <person name="Leoi L.C.T."/>
            <person name="Lima L.F.A."/>
            <person name="Loureiro M.F."/>
            <person name="Lyra M.C.C.P."/>
            <person name="Madeira H.M.F."/>
            <person name="Manfio G.P."/>
            <person name="Maranhao A.Q."/>
            <person name="Martins W.S."/>
            <person name="di Mauro S.M.Z."/>
            <person name="de Medeiros S.R.B."/>
            <person name="Meissner R.V."/>
            <person name="Moreira M.A.M."/>
            <person name="Nascimento F.F."/>
            <person name="Nicolas M.F."/>
            <person name="Oliveira J.G."/>
            <person name="Oliveira S.C."/>
            <person name="Paixao R.F.C."/>
            <person name="Parente J.A."/>
            <person name="Pedrosa F.O."/>
            <person name="Pena S.D.J."/>
            <person name="Pereira J.O."/>
            <person name="Pereira M."/>
            <person name="Pinto L.S.R.C."/>
            <person name="Pinto L.S."/>
            <person name="Porto J.I.R."/>
            <person name="Potrich D.P."/>
            <person name="Ramalho-Neto C.E."/>
            <person name="Reis A.M.M."/>
            <person name="Rigo L.U."/>
            <person name="Rondinelli E."/>
            <person name="Santos E.B.P."/>
            <person name="Santos F.R."/>
            <person name="Schneider M.P.C."/>
            <person name="Seuanez H.N."/>
            <person name="Silva A.M.R."/>
            <person name="da Silva A.L.C."/>
            <person name="Silva D.W."/>
            <person name="Silva R."/>
            <person name="Simoes I.C."/>
            <person name="Simon D."/>
            <person name="Soares C.M.A."/>
            <person name="Soares R.B.A."/>
            <person name="Souza E.M."/>
            <person name="Souza K.R.L."/>
            <person name="Souza R.C."/>
            <person name="Steffens M.B.R."/>
            <person name="Steindel M."/>
            <person name="Teixeira S.R."/>
            <person name="Urmenyi T."/>
            <person name="Vettore A."/>
            <person name="Wassem R."/>
            <person name="Zaha A."/>
            <person name="Simpson A.J.G."/>
        </authorList>
    </citation>
    <scope>NUCLEOTIDE SEQUENCE [LARGE SCALE GENOMIC DNA]</scope>
    <source>
        <strain>ATCC 12472 / DSM 30191 / JCM 1249 / CCUG 213 / NBRC 12614 / NCIMB 9131 / NCTC 9757 / MK</strain>
    </source>
</reference>
<evidence type="ECO:0000255" key="1">
    <source>
        <dbReference type="HAMAP-Rule" id="MF_00236"/>
    </source>
</evidence>
<evidence type="ECO:0000256" key="2">
    <source>
        <dbReference type="SAM" id="MobiDB-lite"/>
    </source>
</evidence>
<comment type="function">
    <text evidence="1">Part of the twin-arginine translocation (Tat) system that transports large folded proteins containing a characteristic twin-arginine motif in their signal peptide across membranes. TatA could form the protein-conducting channel of the Tat system.</text>
</comment>
<comment type="subunit">
    <text evidence="1">The Tat system comprises two distinct complexes: a TatABC complex, containing multiple copies of TatA, TatB and TatC subunits, and a separate TatA complex, containing only TatA subunits. Substrates initially bind to the TatABC complex, which probably triggers association of the separate TatA complex to form the active translocon.</text>
</comment>
<comment type="subcellular location">
    <subcellularLocation>
        <location evidence="1">Cell inner membrane</location>
        <topology evidence="1">Single-pass membrane protein</topology>
    </subcellularLocation>
</comment>
<comment type="similarity">
    <text evidence="1">Belongs to the TatA/E family.</text>
</comment>
<protein>
    <recommendedName>
        <fullName evidence="1">Sec-independent protein translocase protein TatA</fullName>
    </recommendedName>
</protein>
<name>TATA_CHRVO</name>
<dbReference type="EMBL" id="AE016825">
    <property type="protein sequence ID" value="AAQ58299.1"/>
    <property type="molecule type" value="Genomic_DNA"/>
</dbReference>
<dbReference type="RefSeq" id="WP_011134178.1">
    <property type="nucleotide sequence ID" value="NC_005085.1"/>
</dbReference>
<dbReference type="SMR" id="Q7P0E4"/>
<dbReference type="STRING" id="243365.CV_0623"/>
<dbReference type="GeneID" id="66365471"/>
<dbReference type="KEGG" id="cvi:CV_0623"/>
<dbReference type="eggNOG" id="COG1826">
    <property type="taxonomic scope" value="Bacteria"/>
</dbReference>
<dbReference type="HOGENOM" id="CLU_086034_5_3_4"/>
<dbReference type="OrthoDB" id="7066617at2"/>
<dbReference type="Proteomes" id="UP000001424">
    <property type="component" value="Chromosome"/>
</dbReference>
<dbReference type="GO" id="GO:0033281">
    <property type="term" value="C:TAT protein transport complex"/>
    <property type="evidence" value="ECO:0007669"/>
    <property type="project" value="UniProtKB-UniRule"/>
</dbReference>
<dbReference type="GO" id="GO:0008320">
    <property type="term" value="F:protein transmembrane transporter activity"/>
    <property type="evidence" value="ECO:0007669"/>
    <property type="project" value="UniProtKB-UniRule"/>
</dbReference>
<dbReference type="GO" id="GO:0043953">
    <property type="term" value="P:protein transport by the Tat complex"/>
    <property type="evidence" value="ECO:0007669"/>
    <property type="project" value="UniProtKB-UniRule"/>
</dbReference>
<dbReference type="Gene3D" id="1.20.5.3310">
    <property type="match status" value="1"/>
</dbReference>
<dbReference type="HAMAP" id="MF_00236">
    <property type="entry name" value="TatA_E"/>
    <property type="match status" value="1"/>
</dbReference>
<dbReference type="InterPro" id="IPR003369">
    <property type="entry name" value="TatA/B/E"/>
</dbReference>
<dbReference type="InterPro" id="IPR006312">
    <property type="entry name" value="TatA/E"/>
</dbReference>
<dbReference type="NCBIfam" id="NF002813">
    <property type="entry name" value="PRK02958.1"/>
    <property type="match status" value="1"/>
</dbReference>
<dbReference type="NCBIfam" id="TIGR01411">
    <property type="entry name" value="tatAE"/>
    <property type="match status" value="1"/>
</dbReference>
<dbReference type="PANTHER" id="PTHR42982">
    <property type="entry name" value="SEC-INDEPENDENT PROTEIN TRANSLOCASE PROTEIN TATA"/>
    <property type="match status" value="1"/>
</dbReference>
<dbReference type="PANTHER" id="PTHR42982:SF1">
    <property type="entry name" value="SEC-INDEPENDENT PROTEIN TRANSLOCASE PROTEIN TATA"/>
    <property type="match status" value="1"/>
</dbReference>
<dbReference type="Pfam" id="PF02416">
    <property type="entry name" value="TatA_B_E"/>
    <property type="match status" value="1"/>
</dbReference>
<gene>
    <name evidence="1" type="primary">tatA</name>
    <name type="ordered locus">CV_0623</name>
</gene>
<sequence>MGSLSIWHWLIVLLIVVLVFGTKKLPGIGKDLGNAVKGFKEGMNEGAKDGQPPAKDAGRIIDGEADKK</sequence>
<accession>Q7P0E4</accession>
<organism>
    <name type="scientific">Chromobacterium violaceum (strain ATCC 12472 / DSM 30191 / JCM 1249 / CCUG 213 / NBRC 12614 / NCIMB 9131 / NCTC 9757 / MK)</name>
    <dbReference type="NCBI Taxonomy" id="243365"/>
    <lineage>
        <taxon>Bacteria</taxon>
        <taxon>Pseudomonadati</taxon>
        <taxon>Pseudomonadota</taxon>
        <taxon>Betaproteobacteria</taxon>
        <taxon>Neisseriales</taxon>
        <taxon>Chromobacteriaceae</taxon>
        <taxon>Chromobacterium</taxon>
    </lineage>
</organism>
<proteinExistence type="inferred from homology"/>
<feature type="chain" id="PRO_1000044379" description="Sec-independent protein translocase protein TatA">
    <location>
        <begin position="1"/>
        <end position="68"/>
    </location>
</feature>
<feature type="transmembrane region" description="Helical" evidence="1">
    <location>
        <begin position="1"/>
        <end position="21"/>
    </location>
</feature>
<feature type="region of interest" description="Disordered" evidence="2">
    <location>
        <begin position="42"/>
        <end position="68"/>
    </location>
</feature>
<feature type="compositionally biased region" description="Basic and acidic residues" evidence="2">
    <location>
        <begin position="56"/>
        <end position="68"/>
    </location>
</feature>